<protein>
    <recommendedName>
        <fullName evidence="1">Aspartate carbamoyltransferase catalytic subunit</fullName>
        <ecNumber evidence="1">2.1.3.2</ecNumber>
    </recommendedName>
    <alternativeName>
        <fullName evidence="1">Aspartate transcarbamylase</fullName>
        <shortName evidence="1">ATCase</shortName>
    </alternativeName>
</protein>
<gene>
    <name evidence="1" type="primary">pyrB</name>
    <name type="ordered locus">Mlut_12620</name>
</gene>
<keyword id="KW-0665">Pyrimidine biosynthesis</keyword>
<keyword id="KW-1185">Reference proteome</keyword>
<keyword id="KW-0808">Transferase</keyword>
<evidence type="ECO:0000255" key="1">
    <source>
        <dbReference type="HAMAP-Rule" id="MF_00001"/>
    </source>
</evidence>
<name>PYRB_MICLC</name>
<reference key="1">
    <citation type="journal article" date="2010" name="J. Bacteriol.">
        <title>Genome sequence of the Fleming strain of Micrococcus luteus, a simple free-living actinobacterium.</title>
        <authorList>
            <person name="Young M."/>
            <person name="Artsatbanov V."/>
            <person name="Beller H.R."/>
            <person name="Chandra G."/>
            <person name="Chater K.F."/>
            <person name="Dover L.G."/>
            <person name="Goh E.B."/>
            <person name="Kahan T."/>
            <person name="Kaprelyants A.S."/>
            <person name="Kyrpides N."/>
            <person name="Lapidus A."/>
            <person name="Lowry S.R."/>
            <person name="Lykidis A."/>
            <person name="Mahillon J."/>
            <person name="Markowitz V."/>
            <person name="Mavromatis K."/>
            <person name="Mukamolova G.V."/>
            <person name="Oren A."/>
            <person name="Rokem J.S."/>
            <person name="Smith M.C."/>
            <person name="Young D.I."/>
            <person name="Greenblatt C.L."/>
        </authorList>
    </citation>
    <scope>NUCLEOTIDE SEQUENCE [LARGE SCALE GENOMIC DNA]</scope>
    <source>
        <strain>ATCC 4698 / DSM 20030 / JCM 1464 / CCM 169 / CCUG 5858 / IAM 1056 / NBRC 3333 / NCIMB 9278 / NCTC 2665 / VKM Ac-2230</strain>
    </source>
</reference>
<accession>C5CCF5</accession>
<dbReference type="EC" id="2.1.3.2" evidence="1"/>
<dbReference type="EMBL" id="CP001628">
    <property type="protein sequence ID" value="ACS30767.1"/>
    <property type="molecule type" value="Genomic_DNA"/>
</dbReference>
<dbReference type="RefSeq" id="WP_010078596.1">
    <property type="nucleotide sequence ID" value="NC_012803.1"/>
</dbReference>
<dbReference type="SMR" id="C5CCF5"/>
<dbReference type="STRING" id="465515.Mlut_12620"/>
<dbReference type="EnsemblBacteria" id="ACS30767">
    <property type="protein sequence ID" value="ACS30767"/>
    <property type="gene ID" value="Mlut_12620"/>
</dbReference>
<dbReference type="GeneID" id="93345418"/>
<dbReference type="KEGG" id="mlu:Mlut_12620"/>
<dbReference type="PATRIC" id="fig|465515.4.peg.1203"/>
<dbReference type="eggNOG" id="COG0540">
    <property type="taxonomic scope" value="Bacteria"/>
</dbReference>
<dbReference type="HOGENOM" id="CLU_043846_2_0_11"/>
<dbReference type="UniPathway" id="UPA00070">
    <property type="reaction ID" value="UER00116"/>
</dbReference>
<dbReference type="Proteomes" id="UP000000738">
    <property type="component" value="Chromosome"/>
</dbReference>
<dbReference type="GO" id="GO:0005829">
    <property type="term" value="C:cytosol"/>
    <property type="evidence" value="ECO:0007669"/>
    <property type="project" value="TreeGrafter"/>
</dbReference>
<dbReference type="GO" id="GO:0016597">
    <property type="term" value="F:amino acid binding"/>
    <property type="evidence" value="ECO:0007669"/>
    <property type="project" value="InterPro"/>
</dbReference>
<dbReference type="GO" id="GO:0004070">
    <property type="term" value="F:aspartate carbamoyltransferase activity"/>
    <property type="evidence" value="ECO:0007669"/>
    <property type="project" value="UniProtKB-UniRule"/>
</dbReference>
<dbReference type="GO" id="GO:0006207">
    <property type="term" value="P:'de novo' pyrimidine nucleobase biosynthetic process"/>
    <property type="evidence" value="ECO:0007669"/>
    <property type="project" value="InterPro"/>
</dbReference>
<dbReference type="GO" id="GO:0044205">
    <property type="term" value="P:'de novo' UMP biosynthetic process"/>
    <property type="evidence" value="ECO:0007669"/>
    <property type="project" value="UniProtKB-UniRule"/>
</dbReference>
<dbReference type="GO" id="GO:0006520">
    <property type="term" value="P:amino acid metabolic process"/>
    <property type="evidence" value="ECO:0007669"/>
    <property type="project" value="InterPro"/>
</dbReference>
<dbReference type="FunFam" id="3.40.50.1370:FF:000007">
    <property type="entry name" value="Aspartate carbamoyltransferase"/>
    <property type="match status" value="1"/>
</dbReference>
<dbReference type="FunFam" id="3.40.50.1370:FF:000012">
    <property type="entry name" value="Aspartate carbamoyltransferase"/>
    <property type="match status" value="1"/>
</dbReference>
<dbReference type="Gene3D" id="3.40.50.1370">
    <property type="entry name" value="Aspartate/ornithine carbamoyltransferase"/>
    <property type="match status" value="2"/>
</dbReference>
<dbReference type="HAMAP" id="MF_00001">
    <property type="entry name" value="Asp_carb_tr"/>
    <property type="match status" value="1"/>
</dbReference>
<dbReference type="InterPro" id="IPR006132">
    <property type="entry name" value="Asp/Orn_carbamoyltranf_P-bd"/>
</dbReference>
<dbReference type="InterPro" id="IPR006130">
    <property type="entry name" value="Asp/Orn_carbamoylTrfase"/>
</dbReference>
<dbReference type="InterPro" id="IPR036901">
    <property type="entry name" value="Asp/Orn_carbamoylTrfase_sf"/>
</dbReference>
<dbReference type="InterPro" id="IPR002082">
    <property type="entry name" value="Asp_carbamoyltransf"/>
</dbReference>
<dbReference type="InterPro" id="IPR006131">
    <property type="entry name" value="Asp_carbamoyltransf_Asp/Orn-bd"/>
</dbReference>
<dbReference type="NCBIfam" id="TIGR00670">
    <property type="entry name" value="asp_carb_tr"/>
    <property type="match status" value="1"/>
</dbReference>
<dbReference type="NCBIfam" id="NF002032">
    <property type="entry name" value="PRK00856.1"/>
    <property type="match status" value="1"/>
</dbReference>
<dbReference type="PANTHER" id="PTHR45753:SF6">
    <property type="entry name" value="ASPARTATE CARBAMOYLTRANSFERASE"/>
    <property type="match status" value="1"/>
</dbReference>
<dbReference type="PANTHER" id="PTHR45753">
    <property type="entry name" value="ORNITHINE CARBAMOYLTRANSFERASE, MITOCHONDRIAL"/>
    <property type="match status" value="1"/>
</dbReference>
<dbReference type="Pfam" id="PF00185">
    <property type="entry name" value="OTCace"/>
    <property type="match status" value="1"/>
</dbReference>
<dbReference type="Pfam" id="PF02729">
    <property type="entry name" value="OTCace_N"/>
    <property type="match status" value="1"/>
</dbReference>
<dbReference type="PRINTS" id="PR00100">
    <property type="entry name" value="AOTCASE"/>
</dbReference>
<dbReference type="PRINTS" id="PR00101">
    <property type="entry name" value="ATCASE"/>
</dbReference>
<dbReference type="SUPFAM" id="SSF53671">
    <property type="entry name" value="Aspartate/ornithine carbamoyltransferase"/>
    <property type="match status" value="1"/>
</dbReference>
<dbReference type="PROSITE" id="PS00097">
    <property type="entry name" value="CARBAMOYLTRANSFERASE"/>
    <property type="match status" value="1"/>
</dbReference>
<comment type="function">
    <text evidence="1">Catalyzes the condensation of carbamoyl phosphate and aspartate to form carbamoyl aspartate and inorganic phosphate, the committed step in the de novo pyrimidine nucleotide biosynthesis pathway.</text>
</comment>
<comment type="catalytic activity">
    <reaction evidence="1">
        <text>carbamoyl phosphate + L-aspartate = N-carbamoyl-L-aspartate + phosphate + H(+)</text>
        <dbReference type="Rhea" id="RHEA:20013"/>
        <dbReference type="ChEBI" id="CHEBI:15378"/>
        <dbReference type="ChEBI" id="CHEBI:29991"/>
        <dbReference type="ChEBI" id="CHEBI:32814"/>
        <dbReference type="ChEBI" id="CHEBI:43474"/>
        <dbReference type="ChEBI" id="CHEBI:58228"/>
        <dbReference type="EC" id="2.1.3.2"/>
    </reaction>
</comment>
<comment type="pathway">
    <text evidence="1">Pyrimidine metabolism; UMP biosynthesis via de novo pathway; (S)-dihydroorotate from bicarbonate: step 2/3.</text>
</comment>
<comment type="subunit">
    <text evidence="1">Heterododecamer (2C3:3R2) of six catalytic PyrB chains organized as two trimers (C3), and six regulatory PyrI chains organized as three dimers (R2).</text>
</comment>
<comment type="similarity">
    <text evidence="1">Belongs to the aspartate/ornithine carbamoyltransferase superfamily. ATCase family.</text>
</comment>
<feature type="chain" id="PRO_1000201596" description="Aspartate carbamoyltransferase catalytic subunit">
    <location>
        <begin position="1"/>
        <end position="327"/>
    </location>
</feature>
<feature type="binding site" evidence="1">
    <location>
        <position position="54"/>
    </location>
    <ligand>
        <name>carbamoyl phosphate</name>
        <dbReference type="ChEBI" id="CHEBI:58228"/>
    </ligand>
</feature>
<feature type="binding site" evidence="1">
    <location>
        <position position="55"/>
    </location>
    <ligand>
        <name>carbamoyl phosphate</name>
        <dbReference type="ChEBI" id="CHEBI:58228"/>
    </ligand>
</feature>
<feature type="binding site" evidence="1">
    <location>
        <position position="82"/>
    </location>
    <ligand>
        <name>L-aspartate</name>
        <dbReference type="ChEBI" id="CHEBI:29991"/>
    </ligand>
</feature>
<feature type="binding site" evidence="1">
    <location>
        <position position="104"/>
    </location>
    <ligand>
        <name>carbamoyl phosphate</name>
        <dbReference type="ChEBI" id="CHEBI:58228"/>
    </ligand>
</feature>
<feature type="binding site" evidence="1">
    <location>
        <position position="134"/>
    </location>
    <ligand>
        <name>carbamoyl phosphate</name>
        <dbReference type="ChEBI" id="CHEBI:58228"/>
    </ligand>
</feature>
<feature type="binding site" evidence="1">
    <location>
        <position position="137"/>
    </location>
    <ligand>
        <name>carbamoyl phosphate</name>
        <dbReference type="ChEBI" id="CHEBI:58228"/>
    </ligand>
</feature>
<feature type="binding site" evidence="1">
    <location>
        <position position="177"/>
    </location>
    <ligand>
        <name>L-aspartate</name>
        <dbReference type="ChEBI" id="CHEBI:29991"/>
    </ligand>
</feature>
<feature type="binding site" evidence="1">
    <location>
        <position position="232"/>
    </location>
    <ligand>
        <name>L-aspartate</name>
        <dbReference type="ChEBI" id="CHEBI:29991"/>
    </ligand>
</feature>
<feature type="binding site" evidence="1">
    <location>
        <position position="280"/>
    </location>
    <ligand>
        <name>carbamoyl phosphate</name>
        <dbReference type="ChEBI" id="CHEBI:58228"/>
    </ligand>
</feature>
<feature type="binding site" evidence="1">
    <location>
        <position position="281"/>
    </location>
    <ligand>
        <name>carbamoyl phosphate</name>
        <dbReference type="ChEBI" id="CHEBI:58228"/>
    </ligand>
</feature>
<proteinExistence type="inferred from homology"/>
<sequence length="327" mass="34998">MRHLLSTADLSRADALAVLDTAEEMAAVNQREVKKLPALRGRTVVNLFLEDSTRTRISFEAAAKRLSADVINFSAKGSSVSKGESLKDTVQTLEAIGADAIVMRHWSSGAARQLADSGWVRSAVVNAGDGTHEHPTQALLDAFTLRRRLAAATGEDLVGQDLTGMRVVIVGDILHSRVARSNVWLLSTLGAQVTLAAPPTLLPVGVAAWPCQVTYSLDEALDASPDAVMMLRVQAERMGGAFFPSAGEYTRTWGLTDDRFARLTAGRGALLDEPVVMHPGPMNRGLEISPAAADSPRNTALEQVANGVSVRMAVLHLVLNHDQEVRP</sequence>
<organism>
    <name type="scientific">Micrococcus luteus (strain ATCC 4698 / DSM 20030 / JCM 1464 / CCM 169 / CCUG 5858 / IAM 1056 / NBRC 3333 / NCIMB 9278 / NCTC 2665 / VKM Ac-2230)</name>
    <name type="common">Micrococcus lysodeikticus</name>
    <dbReference type="NCBI Taxonomy" id="465515"/>
    <lineage>
        <taxon>Bacteria</taxon>
        <taxon>Bacillati</taxon>
        <taxon>Actinomycetota</taxon>
        <taxon>Actinomycetes</taxon>
        <taxon>Micrococcales</taxon>
        <taxon>Micrococcaceae</taxon>
        <taxon>Micrococcus</taxon>
    </lineage>
</organism>